<reference key="1">
    <citation type="journal article" date="2004" name="Proc. Natl. Acad. Sci. U.S.A.">
        <title>Insights into the evolution of Yersinia pestis through whole-genome comparison with Yersinia pseudotuberculosis.</title>
        <authorList>
            <person name="Chain P.S.G."/>
            <person name="Carniel E."/>
            <person name="Larimer F.W."/>
            <person name="Lamerdin J."/>
            <person name="Stoutland P.O."/>
            <person name="Regala W.M."/>
            <person name="Georgescu A.M."/>
            <person name="Vergez L.M."/>
            <person name="Land M.L."/>
            <person name="Motin V.L."/>
            <person name="Brubaker R.R."/>
            <person name="Fowler J."/>
            <person name="Hinnebusch J."/>
            <person name="Marceau M."/>
            <person name="Medigue C."/>
            <person name="Simonet M."/>
            <person name="Chenal-Francisque V."/>
            <person name="Souza B."/>
            <person name="Dacheux D."/>
            <person name="Elliott J.M."/>
            <person name="Derbise A."/>
            <person name="Hauser L.J."/>
            <person name="Garcia E."/>
        </authorList>
    </citation>
    <scope>NUCLEOTIDE SEQUENCE [LARGE SCALE GENOMIC DNA]</scope>
    <source>
        <strain>IP32953</strain>
    </source>
</reference>
<evidence type="ECO:0000255" key="1">
    <source>
        <dbReference type="HAMAP-Rule" id="MF_00528"/>
    </source>
</evidence>
<evidence type="ECO:0000305" key="2"/>
<sequence>MTALYLASASPRRRELLALLDLPFEVLKTEVEEQRHPGESAQVYVQRLAQDKARAGVAVAPQDLPVLGADTIVVLNGQVLEKPRDKEHAQQILSALSGQKHQVMTAVALADRQNMLSAMVVTDVTFRVLSPLEISDYIATGEPMDKAGAYGIQGKGGCFVRAIAGSYHAVVGLPLVETHELLSHFIAQRNVRGIHDS</sequence>
<keyword id="KW-0963">Cytoplasm</keyword>
<keyword id="KW-0378">Hydrolase</keyword>
<keyword id="KW-0546">Nucleotide metabolism</keyword>
<protein>
    <recommendedName>
        <fullName evidence="1">dTTP/UTP pyrophosphatase</fullName>
        <shortName evidence="1">dTTPase/UTPase</shortName>
        <ecNumber evidence="1">3.6.1.9</ecNumber>
    </recommendedName>
    <alternativeName>
        <fullName evidence="1">Nucleoside triphosphate pyrophosphatase</fullName>
    </alternativeName>
    <alternativeName>
        <fullName evidence="1">Nucleotide pyrophosphatase</fullName>
        <shortName evidence="1">Nucleotide PPase</shortName>
    </alternativeName>
</protein>
<accession>Q665F6</accession>
<name>NTPPA_YERPS</name>
<dbReference type="EC" id="3.6.1.9" evidence="1"/>
<dbReference type="EMBL" id="BX936398">
    <property type="protein sequence ID" value="CAH22800.1"/>
    <property type="status" value="ALT_INIT"/>
    <property type="molecule type" value="Genomic_DNA"/>
</dbReference>
<dbReference type="RefSeq" id="WP_002210078.1">
    <property type="nucleotide sequence ID" value="NZ_CP009712.1"/>
</dbReference>
<dbReference type="SMR" id="Q665F6"/>
<dbReference type="KEGG" id="ypo:BZ17_3039"/>
<dbReference type="KEGG" id="yps:YPTB3562"/>
<dbReference type="PATRIC" id="fig|273123.14.peg.3184"/>
<dbReference type="Proteomes" id="UP000001011">
    <property type="component" value="Chromosome"/>
</dbReference>
<dbReference type="GO" id="GO:0005737">
    <property type="term" value="C:cytoplasm"/>
    <property type="evidence" value="ECO:0007669"/>
    <property type="project" value="UniProtKB-SubCell"/>
</dbReference>
<dbReference type="GO" id="GO:0036218">
    <property type="term" value="F:dTTP diphosphatase activity"/>
    <property type="evidence" value="ECO:0007669"/>
    <property type="project" value="RHEA"/>
</dbReference>
<dbReference type="GO" id="GO:0036221">
    <property type="term" value="F:UTP diphosphatase activity"/>
    <property type="evidence" value="ECO:0007669"/>
    <property type="project" value="RHEA"/>
</dbReference>
<dbReference type="GO" id="GO:0009117">
    <property type="term" value="P:nucleotide metabolic process"/>
    <property type="evidence" value="ECO:0007669"/>
    <property type="project" value="UniProtKB-KW"/>
</dbReference>
<dbReference type="CDD" id="cd00555">
    <property type="entry name" value="Maf"/>
    <property type="match status" value="1"/>
</dbReference>
<dbReference type="FunFam" id="3.90.950.10:FF:000004">
    <property type="entry name" value="dTTP/UTP pyrophosphatase"/>
    <property type="match status" value="1"/>
</dbReference>
<dbReference type="Gene3D" id="3.90.950.10">
    <property type="match status" value="1"/>
</dbReference>
<dbReference type="HAMAP" id="MF_00528">
    <property type="entry name" value="Maf"/>
    <property type="match status" value="1"/>
</dbReference>
<dbReference type="InterPro" id="IPR029001">
    <property type="entry name" value="ITPase-like_fam"/>
</dbReference>
<dbReference type="InterPro" id="IPR003697">
    <property type="entry name" value="Maf-like"/>
</dbReference>
<dbReference type="NCBIfam" id="TIGR00172">
    <property type="entry name" value="maf"/>
    <property type="match status" value="1"/>
</dbReference>
<dbReference type="PANTHER" id="PTHR43213">
    <property type="entry name" value="BIFUNCTIONAL DTTP/UTP PYROPHOSPHATASE/METHYLTRANSFERASE PROTEIN-RELATED"/>
    <property type="match status" value="1"/>
</dbReference>
<dbReference type="PANTHER" id="PTHR43213:SF5">
    <property type="entry name" value="BIFUNCTIONAL DTTP_UTP PYROPHOSPHATASE_METHYLTRANSFERASE PROTEIN-RELATED"/>
    <property type="match status" value="1"/>
</dbReference>
<dbReference type="Pfam" id="PF02545">
    <property type="entry name" value="Maf"/>
    <property type="match status" value="1"/>
</dbReference>
<dbReference type="PIRSF" id="PIRSF006305">
    <property type="entry name" value="Maf"/>
    <property type="match status" value="1"/>
</dbReference>
<dbReference type="SUPFAM" id="SSF52972">
    <property type="entry name" value="ITPase-like"/>
    <property type="match status" value="1"/>
</dbReference>
<feature type="chain" id="PRO_0000267477" description="dTTP/UTP pyrophosphatase">
    <location>
        <begin position="1"/>
        <end position="197"/>
    </location>
</feature>
<feature type="active site" description="Proton acceptor" evidence="1">
    <location>
        <position position="70"/>
    </location>
</feature>
<feature type="site" description="Important for substrate specificity" evidence="1">
    <location>
        <position position="12"/>
    </location>
</feature>
<feature type="site" description="Important for substrate specificity" evidence="1">
    <location>
        <position position="71"/>
    </location>
</feature>
<feature type="site" description="Important for substrate specificity" evidence="1">
    <location>
        <position position="153"/>
    </location>
</feature>
<comment type="function">
    <text evidence="1">Nucleoside triphosphate pyrophosphatase that hydrolyzes dTTP and UTP. May have a dual role in cell division arrest and in preventing the incorporation of modified nucleotides into cellular nucleic acids.</text>
</comment>
<comment type="catalytic activity">
    <reaction evidence="1">
        <text>dTTP + H2O = dTMP + diphosphate + H(+)</text>
        <dbReference type="Rhea" id="RHEA:28534"/>
        <dbReference type="ChEBI" id="CHEBI:15377"/>
        <dbReference type="ChEBI" id="CHEBI:15378"/>
        <dbReference type="ChEBI" id="CHEBI:33019"/>
        <dbReference type="ChEBI" id="CHEBI:37568"/>
        <dbReference type="ChEBI" id="CHEBI:63528"/>
        <dbReference type="EC" id="3.6.1.9"/>
    </reaction>
</comment>
<comment type="catalytic activity">
    <reaction evidence="1">
        <text>UTP + H2O = UMP + diphosphate + H(+)</text>
        <dbReference type="Rhea" id="RHEA:29395"/>
        <dbReference type="ChEBI" id="CHEBI:15377"/>
        <dbReference type="ChEBI" id="CHEBI:15378"/>
        <dbReference type="ChEBI" id="CHEBI:33019"/>
        <dbReference type="ChEBI" id="CHEBI:46398"/>
        <dbReference type="ChEBI" id="CHEBI:57865"/>
        <dbReference type="EC" id="3.6.1.9"/>
    </reaction>
</comment>
<comment type="cofactor">
    <cofactor evidence="1">
        <name>a divalent metal cation</name>
        <dbReference type="ChEBI" id="CHEBI:60240"/>
    </cofactor>
</comment>
<comment type="subcellular location">
    <subcellularLocation>
        <location evidence="1">Cytoplasm</location>
    </subcellularLocation>
</comment>
<comment type="similarity">
    <text evidence="1">Belongs to the Maf family. YhdE subfamily.</text>
</comment>
<comment type="sequence caution" evidence="2">
    <conflict type="erroneous initiation">
        <sequence resource="EMBL-CDS" id="CAH22800"/>
    </conflict>
</comment>
<gene>
    <name type="ordered locus">YPTB3562</name>
</gene>
<organism>
    <name type="scientific">Yersinia pseudotuberculosis serotype I (strain IP32953)</name>
    <dbReference type="NCBI Taxonomy" id="273123"/>
    <lineage>
        <taxon>Bacteria</taxon>
        <taxon>Pseudomonadati</taxon>
        <taxon>Pseudomonadota</taxon>
        <taxon>Gammaproteobacteria</taxon>
        <taxon>Enterobacterales</taxon>
        <taxon>Yersiniaceae</taxon>
        <taxon>Yersinia</taxon>
    </lineage>
</organism>
<proteinExistence type="inferred from homology"/>